<evidence type="ECO:0000255" key="1">
    <source>
        <dbReference type="HAMAP-Rule" id="MF_01342"/>
    </source>
</evidence>
<evidence type="ECO:0000305" key="2"/>
<accession>Q8ETX6</accession>
<proteinExistence type="inferred from homology"/>
<protein>
    <recommendedName>
        <fullName evidence="1">Large ribosomal subunit protein uL16</fullName>
    </recommendedName>
    <alternativeName>
        <fullName evidence="2">50S ribosomal protein L16</fullName>
    </alternativeName>
</protein>
<gene>
    <name evidence="1" type="primary">rplP</name>
    <name type="ordered locus">OB0126</name>
</gene>
<organism>
    <name type="scientific">Oceanobacillus iheyensis (strain DSM 14371 / CIP 107618 / JCM 11309 / KCTC 3954 / HTE831)</name>
    <dbReference type="NCBI Taxonomy" id="221109"/>
    <lineage>
        <taxon>Bacteria</taxon>
        <taxon>Bacillati</taxon>
        <taxon>Bacillota</taxon>
        <taxon>Bacilli</taxon>
        <taxon>Bacillales</taxon>
        <taxon>Bacillaceae</taxon>
        <taxon>Oceanobacillus</taxon>
    </lineage>
</organism>
<sequence length="144" mass="16062">MLMPKRVKYRRQHRGKMRGQAKGGTTVAFGEYGLQATEASWITSRQIEAARIAMTRYMKRGGKVWIKIFPDKPYTAKPLEVRMGSGKGAPEGWVAVVKPGKIMFEIAGVSEEVAREALRLASHKLPVKTKFVKREEIGGESNEG</sequence>
<comment type="function">
    <text evidence="1">Binds 23S rRNA and is also seen to make contacts with the A and possibly P site tRNAs.</text>
</comment>
<comment type="subunit">
    <text evidence="1">Part of the 50S ribosomal subunit.</text>
</comment>
<comment type="similarity">
    <text evidence="1">Belongs to the universal ribosomal protein uL16 family.</text>
</comment>
<dbReference type="EMBL" id="BA000028">
    <property type="protein sequence ID" value="BAC12082.1"/>
    <property type="molecule type" value="Genomic_DNA"/>
</dbReference>
<dbReference type="RefSeq" id="WP_011064529.1">
    <property type="nucleotide sequence ID" value="NC_004193.1"/>
</dbReference>
<dbReference type="SMR" id="Q8ETX6"/>
<dbReference type="STRING" id="221109.gene:10732316"/>
<dbReference type="KEGG" id="oih:OB0126"/>
<dbReference type="eggNOG" id="COG0197">
    <property type="taxonomic scope" value="Bacteria"/>
</dbReference>
<dbReference type="HOGENOM" id="CLU_078858_2_1_9"/>
<dbReference type="OrthoDB" id="9802589at2"/>
<dbReference type="PhylomeDB" id="Q8ETX6"/>
<dbReference type="Proteomes" id="UP000000822">
    <property type="component" value="Chromosome"/>
</dbReference>
<dbReference type="GO" id="GO:0022625">
    <property type="term" value="C:cytosolic large ribosomal subunit"/>
    <property type="evidence" value="ECO:0007669"/>
    <property type="project" value="TreeGrafter"/>
</dbReference>
<dbReference type="GO" id="GO:0019843">
    <property type="term" value="F:rRNA binding"/>
    <property type="evidence" value="ECO:0007669"/>
    <property type="project" value="UniProtKB-UniRule"/>
</dbReference>
<dbReference type="GO" id="GO:0003735">
    <property type="term" value="F:structural constituent of ribosome"/>
    <property type="evidence" value="ECO:0007669"/>
    <property type="project" value="InterPro"/>
</dbReference>
<dbReference type="GO" id="GO:0000049">
    <property type="term" value="F:tRNA binding"/>
    <property type="evidence" value="ECO:0007669"/>
    <property type="project" value="UniProtKB-KW"/>
</dbReference>
<dbReference type="GO" id="GO:0006412">
    <property type="term" value="P:translation"/>
    <property type="evidence" value="ECO:0007669"/>
    <property type="project" value="UniProtKB-UniRule"/>
</dbReference>
<dbReference type="CDD" id="cd01433">
    <property type="entry name" value="Ribosomal_L16_L10e"/>
    <property type="match status" value="1"/>
</dbReference>
<dbReference type="FunFam" id="3.90.1170.10:FF:000001">
    <property type="entry name" value="50S ribosomal protein L16"/>
    <property type="match status" value="1"/>
</dbReference>
<dbReference type="Gene3D" id="3.90.1170.10">
    <property type="entry name" value="Ribosomal protein L10e/L16"/>
    <property type="match status" value="1"/>
</dbReference>
<dbReference type="HAMAP" id="MF_01342">
    <property type="entry name" value="Ribosomal_uL16"/>
    <property type="match status" value="1"/>
</dbReference>
<dbReference type="InterPro" id="IPR047873">
    <property type="entry name" value="Ribosomal_uL16"/>
</dbReference>
<dbReference type="InterPro" id="IPR000114">
    <property type="entry name" value="Ribosomal_uL16_bact-type"/>
</dbReference>
<dbReference type="InterPro" id="IPR020798">
    <property type="entry name" value="Ribosomal_uL16_CS"/>
</dbReference>
<dbReference type="InterPro" id="IPR016180">
    <property type="entry name" value="Ribosomal_uL16_dom"/>
</dbReference>
<dbReference type="InterPro" id="IPR036920">
    <property type="entry name" value="Ribosomal_uL16_sf"/>
</dbReference>
<dbReference type="NCBIfam" id="TIGR01164">
    <property type="entry name" value="rplP_bact"/>
    <property type="match status" value="1"/>
</dbReference>
<dbReference type="PANTHER" id="PTHR12220">
    <property type="entry name" value="50S/60S RIBOSOMAL PROTEIN L16"/>
    <property type="match status" value="1"/>
</dbReference>
<dbReference type="PANTHER" id="PTHR12220:SF13">
    <property type="entry name" value="LARGE RIBOSOMAL SUBUNIT PROTEIN UL16M"/>
    <property type="match status" value="1"/>
</dbReference>
<dbReference type="Pfam" id="PF00252">
    <property type="entry name" value="Ribosomal_L16"/>
    <property type="match status" value="1"/>
</dbReference>
<dbReference type="PRINTS" id="PR00060">
    <property type="entry name" value="RIBOSOMALL16"/>
</dbReference>
<dbReference type="SUPFAM" id="SSF54686">
    <property type="entry name" value="Ribosomal protein L16p/L10e"/>
    <property type="match status" value="1"/>
</dbReference>
<dbReference type="PROSITE" id="PS00586">
    <property type="entry name" value="RIBOSOMAL_L16_1"/>
    <property type="match status" value="1"/>
</dbReference>
<dbReference type="PROSITE" id="PS00701">
    <property type="entry name" value="RIBOSOMAL_L16_2"/>
    <property type="match status" value="1"/>
</dbReference>
<feature type="chain" id="PRO_0000062158" description="Large ribosomal subunit protein uL16">
    <location>
        <begin position="1"/>
        <end position="144"/>
    </location>
</feature>
<keyword id="KW-1185">Reference proteome</keyword>
<keyword id="KW-0687">Ribonucleoprotein</keyword>
<keyword id="KW-0689">Ribosomal protein</keyword>
<keyword id="KW-0694">RNA-binding</keyword>
<keyword id="KW-0699">rRNA-binding</keyword>
<keyword id="KW-0820">tRNA-binding</keyword>
<name>RL16_OCEIH</name>
<reference key="1">
    <citation type="journal article" date="2002" name="Nucleic Acids Res.">
        <title>Genome sequence of Oceanobacillus iheyensis isolated from the Iheya Ridge and its unexpected adaptive capabilities to extreme environments.</title>
        <authorList>
            <person name="Takami H."/>
            <person name="Takaki Y."/>
            <person name="Uchiyama I."/>
        </authorList>
    </citation>
    <scope>NUCLEOTIDE SEQUENCE [LARGE SCALE GENOMIC DNA]</scope>
    <source>
        <strain>DSM 14371 / CIP 107618 / JCM 11309 / KCTC 3954 / HTE831</strain>
    </source>
</reference>